<accession>B6I6K2</accession>
<name>FUCM_ECOSE</name>
<feature type="chain" id="PRO_1000187183" description="L-fucose mutarotase">
    <location>
        <begin position="1"/>
        <end position="140"/>
    </location>
</feature>
<feature type="active site" description="Proton donor" evidence="1">
    <location>
        <position position="22"/>
    </location>
</feature>
<feature type="binding site" evidence="1">
    <location>
        <position position="30"/>
    </location>
    <ligand>
        <name>substrate</name>
    </ligand>
</feature>
<feature type="binding site" evidence="1">
    <location>
        <position position="107"/>
    </location>
    <ligand>
        <name>substrate</name>
    </ligand>
</feature>
<feature type="binding site" evidence="1">
    <location>
        <begin position="129"/>
        <end position="131"/>
    </location>
    <ligand>
        <name>substrate</name>
    </ligand>
</feature>
<organism>
    <name type="scientific">Escherichia coli (strain SE11)</name>
    <dbReference type="NCBI Taxonomy" id="409438"/>
    <lineage>
        <taxon>Bacteria</taxon>
        <taxon>Pseudomonadati</taxon>
        <taxon>Pseudomonadota</taxon>
        <taxon>Gammaproteobacteria</taxon>
        <taxon>Enterobacterales</taxon>
        <taxon>Enterobacteriaceae</taxon>
        <taxon>Escherichia</taxon>
    </lineage>
</organism>
<sequence>MLKTISPLISPELLKVLAEMGHGDEIIFSDAHFPAHSMGPQVIRADGLLVSDLLQAIIPLFELDSYAPPLVMMAAVEGDTLDPEVERRYRNALSLQAPCPDIIRINRFAFYERAQKAFAIVITGERAKYGNILLKKGVTP</sequence>
<comment type="function">
    <text evidence="1">Involved in the anomeric conversion of L-fucose.</text>
</comment>
<comment type="catalytic activity">
    <reaction evidence="1">
        <text>alpha-L-fucose = beta-L-fucose</text>
        <dbReference type="Rhea" id="RHEA:25580"/>
        <dbReference type="ChEBI" id="CHEBI:42548"/>
        <dbReference type="ChEBI" id="CHEBI:42589"/>
        <dbReference type="EC" id="5.1.3.29"/>
    </reaction>
</comment>
<comment type="pathway">
    <text evidence="1">Carbohydrate metabolism; L-fucose metabolism.</text>
</comment>
<comment type="subunit">
    <text evidence="1">Homodecamer.</text>
</comment>
<comment type="subcellular location">
    <subcellularLocation>
        <location evidence="1">Cytoplasm</location>
    </subcellularLocation>
</comment>
<comment type="similarity">
    <text evidence="1">Belongs to the RbsD / FucU family. FucU mutarotase subfamily.</text>
</comment>
<dbReference type="EC" id="5.1.3.29" evidence="1"/>
<dbReference type="EMBL" id="AP009240">
    <property type="protein sequence ID" value="BAG78588.1"/>
    <property type="molecule type" value="Genomic_DNA"/>
</dbReference>
<dbReference type="RefSeq" id="WP_000920840.1">
    <property type="nucleotide sequence ID" value="NC_011415.1"/>
</dbReference>
<dbReference type="SMR" id="B6I6K2"/>
<dbReference type="GeneID" id="93779194"/>
<dbReference type="KEGG" id="ecy:ECSE_3064"/>
<dbReference type="HOGENOM" id="CLU_120075_1_0_6"/>
<dbReference type="UniPathway" id="UPA00956"/>
<dbReference type="Proteomes" id="UP000008199">
    <property type="component" value="Chromosome"/>
</dbReference>
<dbReference type="GO" id="GO:0005737">
    <property type="term" value="C:cytoplasm"/>
    <property type="evidence" value="ECO:0007669"/>
    <property type="project" value="UniProtKB-SubCell"/>
</dbReference>
<dbReference type="GO" id="GO:0042806">
    <property type="term" value="F:fucose binding"/>
    <property type="evidence" value="ECO:0007669"/>
    <property type="project" value="InterPro"/>
</dbReference>
<dbReference type="GO" id="GO:0036373">
    <property type="term" value="F:L-fucose mutarotase activity"/>
    <property type="evidence" value="ECO:0007669"/>
    <property type="project" value="UniProtKB-EC"/>
</dbReference>
<dbReference type="GO" id="GO:0036065">
    <property type="term" value="P:fucosylation"/>
    <property type="evidence" value="ECO:0007669"/>
    <property type="project" value="TreeGrafter"/>
</dbReference>
<dbReference type="GO" id="GO:0042354">
    <property type="term" value="P:L-fucose metabolic process"/>
    <property type="evidence" value="ECO:0007669"/>
    <property type="project" value="UniProtKB-UniRule"/>
</dbReference>
<dbReference type="FunFam" id="3.40.1650.10:FF:000001">
    <property type="entry name" value="L-fucose mutarotase"/>
    <property type="match status" value="1"/>
</dbReference>
<dbReference type="Gene3D" id="3.40.1650.10">
    <property type="entry name" value="RbsD-like domain"/>
    <property type="match status" value="1"/>
</dbReference>
<dbReference type="HAMAP" id="MF_01662">
    <property type="entry name" value="L_fucose_rotase"/>
    <property type="match status" value="1"/>
</dbReference>
<dbReference type="InterPro" id="IPR023751">
    <property type="entry name" value="L-fucose_mutarotase"/>
</dbReference>
<dbReference type="InterPro" id="IPR023750">
    <property type="entry name" value="RbsD-like_sf"/>
</dbReference>
<dbReference type="InterPro" id="IPR050443">
    <property type="entry name" value="RbsD/FucU_mutarotase"/>
</dbReference>
<dbReference type="InterPro" id="IPR007721">
    <property type="entry name" value="RbsD_FucU"/>
</dbReference>
<dbReference type="NCBIfam" id="NF011949">
    <property type="entry name" value="PRK15420.1"/>
    <property type="match status" value="1"/>
</dbReference>
<dbReference type="PANTHER" id="PTHR31690">
    <property type="entry name" value="FUCOSE MUTAROTASE"/>
    <property type="match status" value="1"/>
</dbReference>
<dbReference type="PANTHER" id="PTHR31690:SF4">
    <property type="entry name" value="FUCOSE MUTAROTASE"/>
    <property type="match status" value="1"/>
</dbReference>
<dbReference type="Pfam" id="PF05025">
    <property type="entry name" value="RbsD_FucU"/>
    <property type="match status" value="1"/>
</dbReference>
<dbReference type="SUPFAM" id="SSF102546">
    <property type="entry name" value="RbsD-like"/>
    <property type="match status" value="1"/>
</dbReference>
<protein>
    <recommendedName>
        <fullName evidence="1">L-fucose mutarotase</fullName>
        <ecNumber evidence="1">5.1.3.29</ecNumber>
    </recommendedName>
    <alternativeName>
        <fullName evidence="1">Fucose 1-epimerase</fullName>
    </alternativeName>
    <alternativeName>
        <fullName evidence="1">Type-2 mutarotase</fullName>
    </alternativeName>
</protein>
<proteinExistence type="inferred from homology"/>
<gene>
    <name evidence="1" type="primary">fucU</name>
    <name type="ordered locus">ECSE_3064</name>
</gene>
<keyword id="KW-0119">Carbohydrate metabolism</keyword>
<keyword id="KW-0963">Cytoplasm</keyword>
<keyword id="KW-0294">Fucose metabolism</keyword>
<keyword id="KW-0413">Isomerase</keyword>
<evidence type="ECO:0000255" key="1">
    <source>
        <dbReference type="HAMAP-Rule" id="MF_01662"/>
    </source>
</evidence>
<reference key="1">
    <citation type="journal article" date="2008" name="DNA Res.">
        <title>Complete genome sequence and comparative analysis of the wild-type commensal Escherichia coli strain SE11 isolated from a healthy adult.</title>
        <authorList>
            <person name="Oshima K."/>
            <person name="Toh H."/>
            <person name="Ogura Y."/>
            <person name="Sasamoto H."/>
            <person name="Morita H."/>
            <person name="Park S.-H."/>
            <person name="Ooka T."/>
            <person name="Iyoda S."/>
            <person name="Taylor T.D."/>
            <person name="Hayashi T."/>
            <person name="Itoh K."/>
            <person name="Hattori M."/>
        </authorList>
    </citation>
    <scope>NUCLEOTIDE SEQUENCE [LARGE SCALE GENOMIC DNA]</scope>
    <source>
        <strain>SE11</strain>
    </source>
</reference>